<sequence length="350" mass="38358">MPLVVVCGLPSSGKSRRTEELRRALTGEGRSVYVVDDASVLGAQDSTVYGDSAGEKALRAALRAAVERRLSRQDVVILDSMNYIKGFRYELYCLARAVRTPLCLVYCIRPGWPSRGLPVPGACESSDPAVSVSWRPRADYGEKTQAVGAVEQRAISPLANGGVPTAVPKELDPKDILPSNPPAVMTPESEKSAEPAPCAFPPELLESLALRFEAPDSRNRWDRPLFTVVGLEEPLPLAEIRSALFENRAPPPHQSTQSQPLASGSFLHQLDQATSQVLTAVMEAQKSAVPGDLLTLPGTTEHLRFTRPLTLAELSRLRRQFISYTKMHPNNENLPQLANMFLQYLNQSLH</sequence>
<evidence type="ECO:0000250" key="1">
    <source>
        <dbReference type="UniProtKB" id="Q9D1R2"/>
    </source>
</evidence>
<evidence type="ECO:0000255" key="2"/>
<evidence type="ECO:0000256" key="3">
    <source>
        <dbReference type="SAM" id="MobiDB-lite"/>
    </source>
</evidence>
<evidence type="ECO:0000305" key="4"/>
<evidence type="ECO:0007744" key="5">
    <source>
    </source>
</evidence>
<reference key="1">
    <citation type="journal article" date="2004" name="Genome Res.">
        <title>The status, quality, and expansion of the NIH full-length cDNA project: the Mammalian Gene Collection (MGC).</title>
        <authorList>
            <consortium name="The MGC Project Team"/>
        </authorList>
    </citation>
    <scope>NUCLEOTIDE SEQUENCE [LARGE SCALE MRNA]</scope>
    <source>
        <tissue>Spleen</tissue>
    </source>
</reference>
<reference key="2">
    <citation type="journal article" date="2012" name="Nat. Commun.">
        <title>Quantitative maps of protein phosphorylation sites across 14 different rat organs and tissues.</title>
        <authorList>
            <person name="Lundby A."/>
            <person name="Secher A."/>
            <person name="Lage K."/>
            <person name="Nordsborg N.B."/>
            <person name="Dmytriyev A."/>
            <person name="Lundby C."/>
            <person name="Olsen J.V."/>
        </authorList>
    </citation>
    <scope>PHOSPHORYLATION [LARGE SCALE ANALYSIS] AT SER-156</scope>
    <scope>IDENTIFICATION BY MASS SPECTROMETRY [LARGE SCALE ANALYSIS]</scope>
</reference>
<feature type="chain" id="PRO_0000285688" description="Protein KTI12 homolog">
    <location>
        <begin position="1"/>
        <end position="350"/>
    </location>
</feature>
<feature type="region of interest" description="Disordered" evidence="3">
    <location>
        <begin position="161"/>
        <end position="196"/>
    </location>
</feature>
<feature type="binding site" evidence="2">
    <location>
        <begin position="8"/>
        <end position="15"/>
    </location>
    <ligand>
        <name>ATP</name>
        <dbReference type="ChEBI" id="CHEBI:30616"/>
    </ligand>
</feature>
<feature type="modified residue" description="N6-acetyllysine" evidence="1">
    <location>
        <position position="143"/>
    </location>
</feature>
<feature type="modified residue" description="Phosphoserine" evidence="5">
    <location>
        <position position="156"/>
    </location>
</feature>
<comment type="similarity">
    <text evidence="4">Belongs to the KTI12 family.</text>
</comment>
<organism>
    <name type="scientific">Rattus norvegicus</name>
    <name type="common">Rat</name>
    <dbReference type="NCBI Taxonomy" id="10116"/>
    <lineage>
        <taxon>Eukaryota</taxon>
        <taxon>Metazoa</taxon>
        <taxon>Chordata</taxon>
        <taxon>Craniata</taxon>
        <taxon>Vertebrata</taxon>
        <taxon>Euteleostomi</taxon>
        <taxon>Mammalia</taxon>
        <taxon>Eutheria</taxon>
        <taxon>Euarchontoglires</taxon>
        <taxon>Glires</taxon>
        <taxon>Rodentia</taxon>
        <taxon>Myomorpha</taxon>
        <taxon>Muroidea</taxon>
        <taxon>Muridae</taxon>
        <taxon>Murinae</taxon>
        <taxon>Rattus</taxon>
    </lineage>
</organism>
<accession>Q5I0L7</accession>
<name>KTI12_RAT</name>
<gene>
    <name type="primary">Kti12</name>
</gene>
<protein>
    <recommendedName>
        <fullName>Protein KTI12 homolog</fullName>
    </recommendedName>
</protein>
<dbReference type="EMBL" id="BC088196">
    <property type="protein sequence ID" value="AAH88196.1"/>
    <property type="molecule type" value="mRNA"/>
</dbReference>
<dbReference type="RefSeq" id="NP_001037753.1">
    <property type="nucleotide sequence ID" value="NM_001044288.1"/>
</dbReference>
<dbReference type="SMR" id="Q5I0L7"/>
<dbReference type="FunCoup" id="Q5I0L7">
    <property type="interactions" value="1376"/>
</dbReference>
<dbReference type="iPTMnet" id="Q5I0L7"/>
<dbReference type="PhosphoSitePlus" id="Q5I0L7"/>
<dbReference type="GeneID" id="685656"/>
<dbReference type="KEGG" id="rno:685656"/>
<dbReference type="UCSC" id="RGD:1591357">
    <property type="organism name" value="rat"/>
</dbReference>
<dbReference type="AGR" id="RGD:1591357"/>
<dbReference type="CTD" id="112970"/>
<dbReference type="RGD" id="1591357">
    <property type="gene designation" value="Kti12"/>
</dbReference>
<dbReference type="InParanoid" id="Q5I0L7"/>
<dbReference type="OrthoDB" id="73465at9989"/>
<dbReference type="PhylomeDB" id="Q5I0L7"/>
<dbReference type="PRO" id="PR:Q5I0L7"/>
<dbReference type="Proteomes" id="UP000002494">
    <property type="component" value="Unplaced"/>
</dbReference>
<dbReference type="GO" id="GO:0005524">
    <property type="term" value="F:ATP binding"/>
    <property type="evidence" value="ECO:0007669"/>
    <property type="project" value="UniProtKB-KW"/>
</dbReference>
<dbReference type="GO" id="GO:0002098">
    <property type="term" value="P:tRNA wobble uridine modification"/>
    <property type="evidence" value="ECO:0000318"/>
    <property type="project" value="GO_Central"/>
</dbReference>
<dbReference type="Gene3D" id="3.40.50.300">
    <property type="entry name" value="P-loop containing nucleotide triphosphate hydrolases"/>
    <property type="match status" value="2"/>
</dbReference>
<dbReference type="InterPro" id="IPR013641">
    <property type="entry name" value="KTI12/PSTK"/>
</dbReference>
<dbReference type="InterPro" id="IPR027417">
    <property type="entry name" value="P-loop_NTPase"/>
</dbReference>
<dbReference type="PANTHER" id="PTHR12435">
    <property type="match status" value="1"/>
</dbReference>
<dbReference type="Pfam" id="PF08433">
    <property type="entry name" value="KTI12"/>
    <property type="match status" value="1"/>
</dbReference>
<dbReference type="SUPFAM" id="SSF52540">
    <property type="entry name" value="P-loop containing nucleoside triphosphate hydrolases"/>
    <property type="match status" value="1"/>
</dbReference>
<keyword id="KW-0007">Acetylation</keyword>
<keyword id="KW-0067">ATP-binding</keyword>
<keyword id="KW-0547">Nucleotide-binding</keyword>
<keyword id="KW-0597">Phosphoprotein</keyword>
<keyword id="KW-1185">Reference proteome</keyword>
<proteinExistence type="evidence at protein level"/>